<name>RUSD4_MOUSE</name>
<dbReference type="EC" id="5.4.99.-" evidence="2"/>
<dbReference type="EMBL" id="AK010322">
    <property type="protein sequence ID" value="BAB26852.1"/>
    <property type="molecule type" value="mRNA"/>
</dbReference>
<dbReference type="EMBL" id="AK156574">
    <property type="protein sequence ID" value="BAE33761.1"/>
    <property type="molecule type" value="mRNA"/>
</dbReference>
<dbReference type="EMBL" id="BC061256">
    <property type="protein sequence ID" value="AAH61256.1"/>
    <property type="molecule type" value="mRNA"/>
</dbReference>
<dbReference type="CCDS" id="CCDS22962.1"/>
<dbReference type="RefSeq" id="NP_082316.1">
    <property type="nucleotide sequence ID" value="NM_028040.2"/>
</dbReference>
<dbReference type="SMR" id="Q9CWX4"/>
<dbReference type="BioGRID" id="215077">
    <property type="interactions" value="5"/>
</dbReference>
<dbReference type="FunCoup" id="Q9CWX4">
    <property type="interactions" value="2151"/>
</dbReference>
<dbReference type="STRING" id="10090.ENSMUSP00000034543"/>
<dbReference type="GlyGen" id="Q9CWX4">
    <property type="glycosylation" value="1 site, 1 O-linked glycan (1 site)"/>
</dbReference>
<dbReference type="iPTMnet" id="Q9CWX4"/>
<dbReference type="PhosphoSitePlus" id="Q9CWX4"/>
<dbReference type="PaxDb" id="10090-ENSMUSP00000034543"/>
<dbReference type="PeptideAtlas" id="Q9CWX4"/>
<dbReference type="ProteomicsDB" id="257057"/>
<dbReference type="Pumba" id="Q9CWX4"/>
<dbReference type="Antibodypedia" id="50828">
    <property type="antibodies" value="41 antibodies from 14 providers"/>
</dbReference>
<dbReference type="DNASU" id="71989"/>
<dbReference type="Ensembl" id="ENSMUST00000034543.5">
    <property type="protein sequence ID" value="ENSMUSP00000034543.5"/>
    <property type="gene ID" value="ENSMUSG00000032044.5"/>
</dbReference>
<dbReference type="GeneID" id="71989"/>
<dbReference type="KEGG" id="mmu:71989"/>
<dbReference type="UCSC" id="uc009otc.1">
    <property type="organism name" value="mouse"/>
</dbReference>
<dbReference type="AGR" id="MGI:1919239"/>
<dbReference type="CTD" id="84881"/>
<dbReference type="MGI" id="MGI:1919239">
    <property type="gene designation" value="Rpusd4"/>
</dbReference>
<dbReference type="VEuPathDB" id="HostDB:ENSMUSG00000032044"/>
<dbReference type="eggNOG" id="KOG1919">
    <property type="taxonomic scope" value="Eukaryota"/>
</dbReference>
<dbReference type="GeneTree" id="ENSGT00940000158436"/>
<dbReference type="HOGENOM" id="CLU_016902_2_1_1"/>
<dbReference type="InParanoid" id="Q9CWX4"/>
<dbReference type="OMA" id="AKKYWAI"/>
<dbReference type="OrthoDB" id="428658at2759"/>
<dbReference type="PhylomeDB" id="Q9CWX4"/>
<dbReference type="TreeFam" id="TF337899"/>
<dbReference type="BioGRID-ORCS" id="71989">
    <property type="hits" value="25 hits in 80 CRISPR screens"/>
</dbReference>
<dbReference type="PRO" id="PR:Q9CWX4"/>
<dbReference type="Proteomes" id="UP000000589">
    <property type="component" value="Chromosome 9"/>
</dbReference>
<dbReference type="RNAct" id="Q9CWX4">
    <property type="molecule type" value="protein"/>
</dbReference>
<dbReference type="Bgee" id="ENSMUSG00000032044">
    <property type="expression patterns" value="Expressed in secondary oocyte and 274 other cell types or tissues"/>
</dbReference>
<dbReference type="ExpressionAtlas" id="Q9CWX4">
    <property type="expression patterns" value="baseline and differential"/>
</dbReference>
<dbReference type="GO" id="GO:0005759">
    <property type="term" value="C:mitochondrial matrix"/>
    <property type="evidence" value="ECO:0007669"/>
    <property type="project" value="UniProtKB-SubCell"/>
</dbReference>
<dbReference type="GO" id="GO:0005739">
    <property type="term" value="C:mitochondrion"/>
    <property type="evidence" value="ECO:0007005"/>
    <property type="project" value="MGI"/>
</dbReference>
<dbReference type="GO" id="GO:0005654">
    <property type="term" value="C:nucleoplasm"/>
    <property type="evidence" value="ECO:0007669"/>
    <property type="project" value="Ensembl"/>
</dbReference>
<dbReference type="GO" id="GO:0035770">
    <property type="term" value="C:ribonucleoprotein granule"/>
    <property type="evidence" value="ECO:0007669"/>
    <property type="project" value="Ensembl"/>
</dbReference>
<dbReference type="GO" id="GO:1990400">
    <property type="term" value="F:mitochondrial ribosomal large subunit rRNA binding"/>
    <property type="evidence" value="ECO:0007669"/>
    <property type="project" value="Ensembl"/>
</dbReference>
<dbReference type="GO" id="GO:0000049">
    <property type="term" value="F:tRNA binding"/>
    <property type="evidence" value="ECO:0007669"/>
    <property type="project" value="Ensembl"/>
</dbReference>
<dbReference type="GO" id="GO:0106029">
    <property type="term" value="F:tRNA pseudouridine synthase activity"/>
    <property type="evidence" value="ECO:0007669"/>
    <property type="project" value="RHEA"/>
</dbReference>
<dbReference type="GO" id="GO:0070902">
    <property type="term" value="P:mitochondrial tRNA pseudouridine synthesis"/>
    <property type="evidence" value="ECO:0007669"/>
    <property type="project" value="Ensembl"/>
</dbReference>
<dbReference type="GO" id="GO:0006397">
    <property type="term" value="P:mRNA processing"/>
    <property type="evidence" value="ECO:0007669"/>
    <property type="project" value="UniProtKB-KW"/>
</dbReference>
<dbReference type="GO" id="GO:1990481">
    <property type="term" value="P:mRNA pseudouridine synthesis"/>
    <property type="evidence" value="ECO:0007669"/>
    <property type="project" value="Ensembl"/>
</dbReference>
<dbReference type="GO" id="GO:0070131">
    <property type="term" value="P:positive regulation of mitochondrial translation"/>
    <property type="evidence" value="ECO:0000250"/>
    <property type="project" value="UniProtKB"/>
</dbReference>
<dbReference type="GO" id="GO:0008380">
    <property type="term" value="P:RNA splicing"/>
    <property type="evidence" value="ECO:0007669"/>
    <property type="project" value="UniProtKB-KW"/>
</dbReference>
<dbReference type="GO" id="GO:0031118">
    <property type="term" value="P:rRNA pseudouridine synthesis"/>
    <property type="evidence" value="ECO:0007669"/>
    <property type="project" value="Ensembl"/>
</dbReference>
<dbReference type="CDD" id="cd02869">
    <property type="entry name" value="PseudoU_synth_RluA_like"/>
    <property type="match status" value="1"/>
</dbReference>
<dbReference type="FunFam" id="3.30.2350.10:FF:000015">
    <property type="entry name" value="Mitochondrial RNA pseudouridine synthase RPUSD4"/>
    <property type="match status" value="1"/>
</dbReference>
<dbReference type="Gene3D" id="3.30.2350.10">
    <property type="entry name" value="Pseudouridine synthase"/>
    <property type="match status" value="1"/>
</dbReference>
<dbReference type="InterPro" id="IPR020103">
    <property type="entry name" value="PsdUridine_synth_cat_dom_sf"/>
</dbReference>
<dbReference type="InterPro" id="IPR006224">
    <property type="entry name" value="PsdUridine_synth_RluA-like_CS"/>
</dbReference>
<dbReference type="InterPro" id="IPR006145">
    <property type="entry name" value="PsdUridine_synth_RsuA/RluA"/>
</dbReference>
<dbReference type="InterPro" id="IPR050188">
    <property type="entry name" value="RluA_PseudoU_synthase"/>
</dbReference>
<dbReference type="PANTHER" id="PTHR21600">
    <property type="entry name" value="MITOCHONDRIAL RNA PSEUDOURIDINE SYNTHASE"/>
    <property type="match status" value="1"/>
</dbReference>
<dbReference type="PANTHER" id="PTHR21600:SF83">
    <property type="entry name" value="PSEUDOURIDYLATE SYNTHASE RPUSD4, MITOCHONDRIAL"/>
    <property type="match status" value="1"/>
</dbReference>
<dbReference type="Pfam" id="PF00849">
    <property type="entry name" value="PseudoU_synth_2"/>
    <property type="match status" value="1"/>
</dbReference>
<dbReference type="SUPFAM" id="SSF55120">
    <property type="entry name" value="Pseudouridine synthase"/>
    <property type="match status" value="1"/>
</dbReference>
<dbReference type="PROSITE" id="PS01129">
    <property type="entry name" value="PSI_RLU"/>
    <property type="match status" value="1"/>
</dbReference>
<accession>Q9CWX4</accession>
<gene>
    <name evidence="5" type="primary">Rpusd4</name>
</gene>
<evidence type="ECO:0000250" key="1">
    <source>
        <dbReference type="UniProtKB" id="P0AA39"/>
    </source>
</evidence>
<evidence type="ECO:0000250" key="2">
    <source>
        <dbReference type="UniProtKB" id="Q96CM3"/>
    </source>
</evidence>
<evidence type="ECO:0000255" key="3"/>
<evidence type="ECO:0000305" key="4"/>
<evidence type="ECO:0000312" key="5">
    <source>
        <dbReference type="MGI" id="MGI:1919239"/>
    </source>
</evidence>
<proteinExistence type="evidence at transcript level"/>
<comment type="function">
    <text evidence="2">Catalyzes uridine to pseudouridine isomerization (pseudouridylation) of different mitochondrial RNA substrates. Acts on position 1397 in 16S mitochondrial ribosomal RNA (16S mt-rRNA). This modification is required for the assembly of 16S mt-rRNA into a functional mitochondrial ribosome. As a component of a functional protein-RNA module, consisting of RCC1L, NGRN, RPUSD3, RPUSD4, TRUB2, FASTKD2 and 16S mt-rRNA, controls 16S mt-rRNA abundance and is required for intra-mitochondrial translation. Acts on position 39 in mitochondrial tRNA(Phe). Also catalyzes pseudouridylation of mRNAs in nucleus: acts as a regulator of pre-mRNA splicing by mediating pseudouridylation of pre-mRNAs at locations associated with alternatively spliced regions. Pseudouridylation of pre-mRNAs near splice sites directly regulates mRNA splicing and mRNA 3'-end processing.</text>
</comment>
<comment type="catalytic activity">
    <reaction evidence="2">
        <text>uridine in 5S rRNA = pseudouridine in 5S rRNA</text>
        <dbReference type="Rhea" id="RHEA:47036"/>
        <dbReference type="Rhea" id="RHEA-COMP:11730"/>
        <dbReference type="Rhea" id="RHEA-COMP:11731"/>
        <dbReference type="ChEBI" id="CHEBI:65314"/>
        <dbReference type="ChEBI" id="CHEBI:65315"/>
    </reaction>
</comment>
<comment type="catalytic activity">
    <reaction evidence="2">
        <text>a uridine in tRNA = a pseudouridine in tRNA</text>
        <dbReference type="Rhea" id="RHEA:54572"/>
        <dbReference type="Rhea" id="RHEA-COMP:13339"/>
        <dbReference type="Rhea" id="RHEA-COMP:13934"/>
        <dbReference type="ChEBI" id="CHEBI:65314"/>
        <dbReference type="ChEBI" id="CHEBI:65315"/>
    </reaction>
</comment>
<comment type="catalytic activity">
    <reaction evidence="2">
        <text>a uridine in mRNA = a pseudouridine in mRNA</text>
        <dbReference type="Rhea" id="RHEA:56644"/>
        <dbReference type="Rhea" id="RHEA-COMP:14658"/>
        <dbReference type="Rhea" id="RHEA-COMP:14659"/>
        <dbReference type="ChEBI" id="CHEBI:65314"/>
        <dbReference type="ChEBI" id="CHEBI:65315"/>
    </reaction>
</comment>
<comment type="subunit">
    <text evidence="2">Interacts with 16S mt-rRNA, mt-tRNA(Phe) and mt-tRNA(Met). Forms a regulatory protein-RNA complex, consisting of RCC1L, NGRN, RPUSD3, RPUSD4, TRUB2, FASTKD2 and 16S mt-rRNA.</text>
</comment>
<comment type="subcellular location">
    <subcellularLocation>
        <location evidence="2">Mitochondrion matrix</location>
    </subcellularLocation>
    <subcellularLocation>
        <location evidence="2">Nucleus</location>
    </subcellularLocation>
    <subcellularLocation>
        <location evidence="2">Cytoplasm</location>
    </subcellularLocation>
    <text evidence="2">Mainly localizes to mitochondrion. Localizes to mitochondrial RNA granules, platforms for post-transcriptional RNA modification and ribosome assembly. Also found in nucleus and cytoplasm.</text>
</comment>
<comment type="similarity">
    <text evidence="4">Belongs to the pseudouridine synthase RluA family.</text>
</comment>
<organism>
    <name type="scientific">Mus musculus</name>
    <name type="common">Mouse</name>
    <dbReference type="NCBI Taxonomy" id="10090"/>
    <lineage>
        <taxon>Eukaryota</taxon>
        <taxon>Metazoa</taxon>
        <taxon>Chordata</taxon>
        <taxon>Craniata</taxon>
        <taxon>Vertebrata</taxon>
        <taxon>Euteleostomi</taxon>
        <taxon>Mammalia</taxon>
        <taxon>Eutheria</taxon>
        <taxon>Euarchontoglires</taxon>
        <taxon>Glires</taxon>
        <taxon>Rodentia</taxon>
        <taxon>Myomorpha</taxon>
        <taxon>Muroidea</taxon>
        <taxon>Muridae</taxon>
        <taxon>Murinae</taxon>
        <taxon>Mus</taxon>
        <taxon>Mus</taxon>
    </lineage>
</organism>
<protein>
    <recommendedName>
        <fullName evidence="4">Pseudouridylate synthase RPUSD4, mitochondrial</fullName>
        <ecNumber evidence="2">5.4.99.-</ecNumber>
    </recommendedName>
    <alternativeName>
        <fullName evidence="4">RNA pseudouridylate synthase domain-containing protein 4</fullName>
    </alternativeName>
</protein>
<keyword id="KW-0963">Cytoplasm</keyword>
<keyword id="KW-0413">Isomerase</keyword>
<keyword id="KW-0496">Mitochondrion</keyword>
<keyword id="KW-0507">mRNA processing</keyword>
<keyword id="KW-0508">mRNA splicing</keyword>
<keyword id="KW-0539">Nucleus</keyword>
<keyword id="KW-1185">Reference proteome</keyword>
<keyword id="KW-0698">rRNA processing</keyword>
<keyword id="KW-0809">Transit peptide</keyword>
<keyword id="KW-0819">tRNA processing</keyword>
<sequence>MAAPCLRTPGVQLLSMSSRPGRLFTPGSWSFCSSATSSRPLNAQRLAEKLRAQKQEQKAKEVRVPTNPVQRRVQELVRFTQQLQRVHPNVLAKELSRRILHQDNDLVVINKPYGLPVHGGPGVQLCISDVLPILAKMLHGHKAEPLHLCHRLDKETTGVMVLAWEKDMAHQVQELFRTRQVEKKYWAITVRVPLPSAGVVDIPIKEKEVQGPQQHHKMTLSPSYRLDNGKMVKVRASRDAHVAVTQYQVLSSASSSALVELQPVTGIKHQLRVHLSFGLDCPILGDHKYSDWTRLAPQKLSAGTLKKLGLQQSKARYIPLHLHARQLILPALGSRTEELLLTCKLPHFFARSLLRLGLDMPNQDQSRGNKARHVEAR</sequence>
<reference key="1">
    <citation type="journal article" date="2005" name="Science">
        <title>The transcriptional landscape of the mammalian genome.</title>
        <authorList>
            <person name="Carninci P."/>
            <person name="Kasukawa T."/>
            <person name="Katayama S."/>
            <person name="Gough J."/>
            <person name="Frith M.C."/>
            <person name="Maeda N."/>
            <person name="Oyama R."/>
            <person name="Ravasi T."/>
            <person name="Lenhard B."/>
            <person name="Wells C."/>
            <person name="Kodzius R."/>
            <person name="Shimokawa K."/>
            <person name="Bajic V.B."/>
            <person name="Brenner S.E."/>
            <person name="Batalov S."/>
            <person name="Forrest A.R."/>
            <person name="Zavolan M."/>
            <person name="Davis M.J."/>
            <person name="Wilming L.G."/>
            <person name="Aidinis V."/>
            <person name="Allen J.E."/>
            <person name="Ambesi-Impiombato A."/>
            <person name="Apweiler R."/>
            <person name="Aturaliya R.N."/>
            <person name="Bailey T.L."/>
            <person name="Bansal M."/>
            <person name="Baxter L."/>
            <person name="Beisel K.W."/>
            <person name="Bersano T."/>
            <person name="Bono H."/>
            <person name="Chalk A.M."/>
            <person name="Chiu K.P."/>
            <person name="Choudhary V."/>
            <person name="Christoffels A."/>
            <person name="Clutterbuck D.R."/>
            <person name="Crowe M.L."/>
            <person name="Dalla E."/>
            <person name="Dalrymple B.P."/>
            <person name="de Bono B."/>
            <person name="Della Gatta G."/>
            <person name="di Bernardo D."/>
            <person name="Down T."/>
            <person name="Engstrom P."/>
            <person name="Fagiolini M."/>
            <person name="Faulkner G."/>
            <person name="Fletcher C.F."/>
            <person name="Fukushima T."/>
            <person name="Furuno M."/>
            <person name="Futaki S."/>
            <person name="Gariboldi M."/>
            <person name="Georgii-Hemming P."/>
            <person name="Gingeras T.R."/>
            <person name="Gojobori T."/>
            <person name="Green R.E."/>
            <person name="Gustincich S."/>
            <person name="Harbers M."/>
            <person name="Hayashi Y."/>
            <person name="Hensch T.K."/>
            <person name="Hirokawa N."/>
            <person name="Hill D."/>
            <person name="Huminiecki L."/>
            <person name="Iacono M."/>
            <person name="Ikeo K."/>
            <person name="Iwama A."/>
            <person name="Ishikawa T."/>
            <person name="Jakt M."/>
            <person name="Kanapin A."/>
            <person name="Katoh M."/>
            <person name="Kawasawa Y."/>
            <person name="Kelso J."/>
            <person name="Kitamura H."/>
            <person name="Kitano H."/>
            <person name="Kollias G."/>
            <person name="Krishnan S.P."/>
            <person name="Kruger A."/>
            <person name="Kummerfeld S.K."/>
            <person name="Kurochkin I.V."/>
            <person name="Lareau L.F."/>
            <person name="Lazarevic D."/>
            <person name="Lipovich L."/>
            <person name="Liu J."/>
            <person name="Liuni S."/>
            <person name="McWilliam S."/>
            <person name="Madan Babu M."/>
            <person name="Madera M."/>
            <person name="Marchionni L."/>
            <person name="Matsuda H."/>
            <person name="Matsuzawa S."/>
            <person name="Miki H."/>
            <person name="Mignone F."/>
            <person name="Miyake S."/>
            <person name="Morris K."/>
            <person name="Mottagui-Tabar S."/>
            <person name="Mulder N."/>
            <person name="Nakano N."/>
            <person name="Nakauchi H."/>
            <person name="Ng P."/>
            <person name="Nilsson R."/>
            <person name="Nishiguchi S."/>
            <person name="Nishikawa S."/>
            <person name="Nori F."/>
            <person name="Ohara O."/>
            <person name="Okazaki Y."/>
            <person name="Orlando V."/>
            <person name="Pang K.C."/>
            <person name="Pavan W.J."/>
            <person name="Pavesi G."/>
            <person name="Pesole G."/>
            <person name="Petrovsky N."/>
            <person name="Piazza S."/>
            <person name="Reed J."/>
            <person name="Reid J.F."/>
            <person name="Ring B.Z."/>
            <person name="Ringwald M."/>
            <person name="Rost B."/>
            <person name="Ruan Y."/>
            <person name="Salzberg S.L."/>
            <person name="Sandelin A."/>
            <person name="Schneider C."/>
            <person name="Schoenbach C."/>
            <person name="Sekiguchi K."/>
            <person name="Semple C.A."/>
            <person name="Seno S."/>
            <person name="Sessa L."/>
            <person name="Sheng Y."/>
            <person name="Shibata Y."/>
            <person name="Shimada H."/>
            <person name="Shimada K."/>
            <person name="Silva D."/>
            <person name="Sinclair B."/>
            <person name="Sperling S."/>
            <person name="Stupka E."/>
            <person name="Sugiura K."/>
            <person name="Sultana R."/>
            <person name="Takenaka Y."/>
            <person name="Taki K."/>
            <person name="Tammoja K."/>
            <person name="Tan S.L."/>
            <person name="Tang S."/>
            <person name="Taylor M.S."/>
            <person name="Tegner J."/>
            <person name="Teichmann S.A."/>
            <person name="Ueda H.R."/>
            <person name="van Nimwegen E."/>
            <person name="Verardo R."/>
            <person name="Wei C.L."/>
            <person name="Yagi K."/>
            <person name="Yamanishi H."/>
            <person name="Zabarovsky E."/>
            <person name="Zhu S."/>
            <person name="Zimmer A."/>
            <person name="Hide W."/>
            <person name="Bult C."/>
            <person name="Grimmond S.M."/>
            <person name="Teasdale R.D."/>
            <person name="Liu E.T."/>
            <person name="Brusic V."/>
            <person name="Quackenbush J."/>
            <person name="Wahlestedt C."/>
            <person name="Mattick J.S."/>
            <person name="Hume D.A."/>
            <person name="Kai C."/>
            <person name="Sasaki D."/>
            <person name="Tomaru Y."/>
            <person name="Fukuda S."/>
            <person name="Kanamori-Katayama M."/>
            <person name="Suzuki M."/>
            <person name="Aoki J."/>
            <person name="Arakawa T."/>
            <person name="Iida J."/>
            <person name="Imamura K."/>
            <person name="Itoh M."/>
            <person name="Kato T."/>
            <person name="Kawaji H."/>
            <person name="Kawagashira N."/>
            <person name="Kawashima T."/>
            <person name="Kojima M."/>
            <person name="Kondo S."/>
            <person name="Konno H."/>
            <person name="Nakano K."/>
            <person name="Ninomiya N."/>
            <person name="Nishio T."/>
            <person name="Okada M."/>
            <person name="Plessy C."/>
            <person name="Shibata K."/>
            <person name="Shiraki T."/>
            <person name="Suzuki S."/>
            <person name="Tagami M."/>
            <person name="Waki K."/>
            <person name="Watahiki A."/>
            <person name="Okamura-Oho Y."/>
            <person name="Suzuki H."/>
            <person name="Kawai J."/>
            <person name="Hayashizaki Y."/>
        </authorList>
    </citation>
    <scope>NUCLEOTIDE SEQUENCE [LARGE SCALE MRNA]</scope>
    <source>
        <strain>C57BL/6J</strain>
        <strain>NOD</strain>
        <tissue>Spleen</tissue>
    </source>
</reference>
<reference key="2">
    <citation type="journal article" date="2004" name="Genome Res.">
        <title>The status, quality, and expansion of the NIH full-length cDNA project: the Mammalian Gene Collection (MGC).</title>
        <authorList>
            <consortium name="The MGC Project Team"/>
        </authorList>
    </citation>
    <scope>NUCLEOTIDE SEQUENCE [LARGE SCALE MRNA]</scope>
    <source>
        <tissue>Pituitary</tissue>
    </source>
</reference>
<feature type="transit peptide" description="Mitochondrion" evidence="3">
    <location>
        <begin position="1"/>
        <end position="46"/>
    </location>
</feature>
<feature type="chain" id="PRO_0000300826" description="Pseudouridylate synthase RPUSD4, mitochondrial">
    <location>
        <begin position="47"/>
        <end position="377"/>
    </location>
</feature>
<feature type="active site" evidence="1">
    <location>
        <position position="153"/>
    </location>
</feature>